<reference key="1">
    <citation type="submission" date="2008-06" db="EMBL/GenBank/DDBJ databases">
        <title>Lactobacillus casei BL23 complete genome sequence.</title>
        <authorList>
            <person name="Maze A."/>
            <person name="Boel G."/>
            <person name="Bourand A."/>
            <person name="Loux V."/>
            <person name="Gibrat J.F."/>
            <person name="Zuniga M."/>
            <person name="Hartke A."/>
            <person name="Deutscher J."/>
        </authorList>
    </citation>
    <scope>NUCLEOTIDE SEQUENCE [LARGE SCALE GENOMIC DNA]</scope>
    <source>
        <strain>BL23</strain>
    </source>
</reference>
<dbReference type="EC" id="2.7.11.32" evidence="1"/>
<dbReference type="EC" id="2.7.4.27" evidence="1"/>
<dbReference type="EMBL" id="FM177140">
    <property type="protein sequence ID" value="CAQ66819.1"/>
    <property type="molecule type" value="Genomic_DNA"/>
</dbReference>
<dbReference type="SMR" id="B3WEL8"/>
<dbReference type="KEGG" id="lcb:LCABL_17380"/>
<dbReference type="HOGENOM" id="CLU_046206_2_1_9"/>
<dbReference type="GO" id="GO:0043531">
    <property type="term" value="F:ADP binding"/>
    <property type="evidence" value="ECO:0007669"/>
    <property type="project" value="UniProtKB-UniRule"/>
</dbReference>
<dbReference type="GO" id="GO:0005524">
    <property type="term" value="F:ATP binding"/>
    <property type="evidence" value="ECO:0007669"/>
    <property type="project" value="InterPro"/>
</dbReference>
<dbReference type="GO" id="GO:0016776">
    <property type="term" value="F:phosphotransferase activity, phosphate group as acceptor"/>
    <property type="evidence" value="ECO:0007669"/>
    <property type="project" value="UniProtKB-UniRule"/>
</dbReference>
<dbReference type="GO" id="GO:0004674">
    <property type="term" value="F:protein serine/threonine kinase activity"/>
    <property type="evidence" value="ECO:0007669"/>
    <property type="project" value="UniProtKB-UniRule"/>
</dbReference>
<dbReference type="HAMAP" id="MF_00921">
    <property type="entry name" value="PDRP"/>
    <property type="match status" value="1"/>
</dbReference>
<dbReference type="InterPro" id="IPR005177">
    <property type="entry name" value="Kinase-pyrophosphorylase"/>
</dbReference>
<dbReference type="InterPro" id="IPR027417">
    <property type="entry name" value="P-loop_NTPase"/>
</dbReference>
<dbReference type="InterPro" id="IPR026565">
    <property type="entry name" value="PPDK_reg"/>
</dbReference>
<dbReference type="NCBIfam" id="NF003742">
    <property type="entry name" value="PRK05339.1"/>
    <property type="match status" value="1"/>
</dbReference>
<dbReference type="PANTHER" id="PTHR31756">
    <property type="entry name" value="PYRUVATE, PHOSPHATE DIKINASE REGULATORY PROTEIN 1, CHLOROPLASTIC"/>
    <property type="match status" value="1"/>
</dbReference>
<dbReference type="PANTHER" id="PTHR31756:SF3">
    <property type="entry name" value="PYRUVATE, PHOSPHATE DIKINASE REGULATORY PROTEIN 1, CHLOROPLASTIC"/>
    <property type="match status" value="1"/>
</dbReference>
<dbReference type="Pfam" id="PF03618">
    <property type="entry name" value="Kinase-PPPase"/>
    <property type="match status" value="1"/>
</dbReference>
<dbReference type="SUPFAM" id="SSF52540">
    <property type="entry name" value="P-loop containing nucleoside triphosphate hydrolases"/>
    <property type="match status" value="1"/>
</dbReference>
<protein>
    <recommendedName>
        <fullName evidence="1">Putative pyruvate, phosphate dikinase regulatory protein</fullName>
        <shortName evidence="1">PPDK regulatory protein</shortName>
        <ecNumber evidence="1">2.7.11.32</ecNumber>
        <ecNumber evidence="1">2.7.4.27</ecNumber>
    </recommendedName>
</protein>
<keyword id="KW-0418">Kinase</keyword>
<keyword id="KW-0547">Nucleotide-binding</keyword>
<keyword id="KW-0723">Serine/threonine-protein kinase</keyword>
<keyword id="KW-0808">Transferase</keyword>
<feature type="chain" id="PRO_1000136479" description="Putative pyruvate, phosphate dikinase regulatory protein">
    <location>
        <begin position="1"/>
        <end position="276"/>
    </location>
</feature>
<feature type="binding site" evidence="1">
    <location>
        <begin position="150"/>
        <end position="157"/>
    </location>
    <ligand>
        <name>ADP</name>
        <dbReference type="ChEBI" id="CHEBI:456216"/>
    </ligand>
</feature>
<proteinExistence type="inferred from homology"/>
<organism>
    <name type="scientific">Lacticaseibacillus casei (strain BL23)</name>
    <name type="common">Lactobacillus casei</name>
    <dbReference type="NCBI Taxonomy" id="543734"/>
    <lineage>
        <taxon>Bacteria</taxon>
        <taxon>Bacillati</taxon>
        <taxon>Bacillota</taxon>
        <taxon>Bacilli</taxon>
        <taxon>Lactobacillales</taxon>
        <taxon>Lactobacillaceae</taxon>
        <taxon>Lacticaseibacillus</taxon>
    </lineage>
</organism>
<accession>B3WEL8</accession>
<comment type="function">
    <text evidence="1">Bifunctional serine/threonine kinase and phosphorylase involved in the regulation of the pyruvate, phosphate dikinase (PPDK) by catalyzing its phosphorylation/dephosphorylation.</text>
</comment>
<comment type="catalytic activity">
    <reaction evidence="1">
        <text>N(tele)-phospho-L-histidyl/L-threonyl-[pyruvate, phosphate dikinase] + ADP = N(tele)-phospho-L-histidyl/O-phospho-L-threonyl-[pyruvate, phosphate dikinase] + AMP + H(+)</text>
        <dbReference type="Rhea" id="RHEA:43692"/>
        <dbReference type="Rhea" id="RHEA-COMP:10650"/>
        <dbReference type="Rhea" id="RHEA-COMP:10651"/>
        <dbReference type="ChEBI" id="CHEBI:15378"/>
        <dbReference type="ChEBI" id="CHEBI:30013"/>
        <dbReference type="ChEBI" id="CHEBI:61977"/>
        <dbReference type="ChEBI" id="CHEBI:83586"/>
        <dbReference type="ChEBI" id="CHEBI:456215"/>
        <dbReference type="ChEBI" id="CHEBI:456216"/>
        <dbReference type="EC" id="2.7.11.32"/>
    </reaction>
</comment>
<comment type="catalytic activity">
    <reaction evidence="1">
        <text>N(tele)-phospho-L-histidyl/O-phospho-L-threonyl-[pyruvate, phosphate dikinase] + phosphate + H(+) = N(tele)-phospho-L-histidyl/L-threonyl-[pyruvate, phosphate dikinase] + diphosphate</text>
        <dbReference type="Rhea" id="RHEA:43696"/>
        <dbReference type="Rhea" id="RHEA-COMP:10650"/>
        <dbReference type="Rhea" id="RHEA-COMP:10651"/>
        <dbReference type="ChEBI" id="CHEBI:15378"/>
        <dbReference type="ChEBI" id="CHEBI:30013"/>
        <dbReference type="ChEBI" id="CHEBI:33019"/>
        <dbReference type="ChEBI" id="CHEBI:43474"/>
        <dbReference type="ChEBI" id="CHEBI:61977"/>
        <dbReference type="ChEBI" id="CHEBI:83586"/>
        <dbReference type="EC" id="2.7.4.27"/>
    </reaction>
</comment>
<comment type="similarity">
    <text evidence="1">Belongs to the pyruvate, phosphate/water dikinase regulatory protein family. PDRP subfamily.</text>
</comment>
<name>PDRP_LACCB</name>
<sequence length="276" mass="30900">MTQELNLYIMSDSVGETGLRLAQAVAAQFPNFEAHYVRFPFIHTEEKIYSALDEAKKENALAIMTFVTSGFAQLATHYAKDQGVIAIDVMSPILSGIKSITHEEPNHVPGAVHDLNERYFDRISAMEFAVLYDDGKDPKGFLEADIVLLGVSRTSKTPLSLFLANRNLKVANLPLVPNAHIPEEIWSVDPKKIVGLTTDASVLMEFRRQRMIAYGLNPDTAYSARDQVNQELKFAEDLYKKIGCMVINTAHRSIEETATLILEHMGLDEFDNTETH</sequence>
<gene>
    <name type="ordered locus">LCABL_17380</name>
</gene>
<evidence type="ECO:0000255" key="1">
    <source>
        <dbReference type="HAMAP-Rule" id="MF_00921"/>
    </source>
</evidence>